<protein>
    <recommendedName>
        <fullName evidence="1">Acetyl-coenzyme A carboxylase carboxyl transferase subunit alpha</fullName>
        <shortName evidence="1">ACCase subunit alpha</shortName>
        <shortName evidence="1">Acetyl-CoA carboxylase carboxyltransferase subunit alpha</shortName>
        <ecNumber evidence="1">2.1.3.15</ecNumber>
    </recommendedName>
</protein>
<proteinExistence type="inferred from homology"/>
<evidence type="ECO:0000255" key="1">
    <source>
        <dbReference type="HAMAP-Rule" id="MF_00823"/>
    </source>
</evidence>
<evidence type="ECO:0000255" key="2">
    <source>
        <dbReference type="PROSITE-ProRule" id="PRU01137"/>
    </source>
</evidence>
<feature type="chain" id="PRO_1000062593" description="Acetyl-coenzyme A carboxylase carboxyl transferase subunit alpha">
    <location>
        <begin position="1"/>
        <end position="323"/>
    </location>
</feature>
<feature type="domain" description="CoA carboxyltransferase C-terminal" evidence="2">
    <location>
        <begin position="39"/>
        <end position="293"/>
    </location>
</feature>
<dbReference type="EC" id="2.1.3.15" evidence="1"/>
<dbReference type="EMBL" id="CP000570">
    <property type="protein sequence ID" value="ABN82062.1"/>
    <property type="molecule type" value="Genomic_DNA"/>
</dbReference>
<dbReference type="RefSeq" id="WP_004193249.1">
    <property type="nucleotide sequence ID" value="NC_009074.1"/>
</dbReference>
<dbReference type="SMR" id="A3NB48"/>
<dbReference type="KEGG" id="bpd:BURPS668_2543"/>
<dbReference type="HOGENOM" id="CLU_015486_0_2_4"/>
<dbReference type="UniPathway" id="UPA00655">
    <property type="reaction ID" value="UER00711"/>
</dbReference>
<dbReference type="GO" id="GO:0009317">
    <property type="term" value="C:acetyl-CoA carboxylase complex"/>
    <property type="evidence" value="ECO:0007669"/>
    <property type="project" value="InterPro"/>
</dbReference>
<dbReference type="GO" id="GO:0003989">
    <property type="term" value="F:acetyl-CoA carboxylase activity"/>
    <property type="evidence" value="ECO:0007669"/>
    <property type="project" value="InterPro"/>
</dbReference>
<dbReference type="GO" id="GO:0005524">
    <property type="term" value="F:ATP binding"/>
    <property type="evidence" value="ECO:0007669"/>
    <property type="project" value="UniProtKB-KW"/>
</dbReference>
<dbReference type="GO" id="GO:0016743">
    <property type="term" value="F:carboxyl- or carbamoyltransferase activity"/>
    <property type="evidence" value="ECO:0007669"/>
    <property type="project" value="UniProtKB-UniRule"/>
</dbReference>
<dbReference type="GO" id="GO:0006633">
    <property type="term" value="P:fatty acid biosynthetic process"/>
    <property type="evidence" value="ECO:0007669"/>
    <property type="project" value="UniProtKB-KW"/>
</dbReference>
<dbReference type="GO" id="GO:2001295">
    <property type="term" value="P:malonyl-CoA biosynthetic process"/>
    <property type="evidence" value="ECO:0007669"/>
    <property type="project" value="UniProtKB-UniRule"/>
</dbReference>
<dbReference type="Gene3D" id="3.90.226.10">
    <property type="entry name" value="2-enoyl-CoA Hydratase, Chain A, domain 1"/>
    <property type="match status" value="1"/>
</dbReference>
<dbReference type="HAMAP" id="MF_00823">
    <property type="entry name" value="AcetylCoA_CT_alpha"/>
    <property type="match status" value="1"/>
</dbReference>
<dbReference type="InterPro" id="IPR001095">
    <property type="entry name" value="Acetyl_CoA_COase_a_su"/>
</dbReference>
<dbReference type="InterPro" id="IPR029045">
    <property type="entry name" value="ClpP/crotonase-like_dom_sf"/>
</dbReference>
<dbReference type="InterPro" id="IPR011763">
    <property type="entry name" value="COA_CT_C"/>
</dbReference>
<dbReference type="NCBIfam" id="TIGR00513">
    <property type="entry name" value="accA"/>
    <property type="match status" value="1"/>
</dbReference>
<dbReference type="NCBIfam" id="NF041504">
    <property type="entry name" value="AccA_sub"/>
    <property type="match status" value="1"/>
</dbReference>
<dbReference type="NCBIfam" id="NF004344">
    <property type="entry name" value="PRK05724.1"/>
    <property type="match status" value="1"/>
</dbReference>
<dbReference type="PANTHER" id="PTHR42853">
    <property type="entry name" value="ACETYL-COENZYME A CARBOXYLASE CARBOXYL TRANSFERASE SUBUNIT ALPHA"/>
    <property type="match status" value="1"/>
</dbReference>
<dbReference type="PANTHER" id="PTHR42853:SF3">
    <property type="entry name" value="ACETYL-COENZYME A CARBOXYLASE CARBOXYL TRANSFERASE SUBUNIT ALPHA, CHLOROPLASTIC"/>
    <property type="match status" value="1"/>
</dbReference>
<dbReference type="Pfam" id="PF03255">
    <property type="entry name" value="ACCA"/>
    <property type="match status" value="1"/>
</dbReference>
<dbReference type="PRINTS" id="PR01069">
    <property type="entry name" value="ACCCTRFRASEA"/>
</dbReference>
<dbReference type="SUPFAM" id="SSF52096">
    <property type="entry name" value="ClpP/crotonase"/>
    <property type="match status" value="1"/>
</dbReference>
<dbReference type="PROSITE" id="PS50989">
    <property type="entry name" value="COA_CT_CTER"/>
    <property type="match status" value="1"/>
</dbReference>
<reference key="1">
    <citation type="journal article" date="2010" name="Genome Biol. Evol.">
        <title>Continuing evolution of Burkholderia mallei through genome reduction and large-scale rearrangements.</title>
        <authorList>
            <person name="Losada L."/>
            <person name="Ronning C.M."/>
            <person name="DeShazer D."/>
            <person name="Woods D."/>
            <person name="Fedorova N."/>
            <person name="Kim H.S."/>
            <person name="Shabalina S.A."/>
            <person name="Pearson T.R."/>
            <person name="Brinkac L."/>
            <person name="Tan P."/>
            <person name="Nandi T."/>
            <person name="Crabtree J."/>
            <person name="Badger J."/>
            <person name="Beckstrom-Sternberg S."/>
            <person name="Saqib M."/>
            <person name="Schutzer S.E."/>
            <person name="Keim P."/>
            <person name="Nierman W.C."/>
        </authorList>
    </citation>
    <scope>NUCLEOTIDE SEQUENCE [LARGE SCALE GENOMIC DNA]</scope>
    <source>
        <strain>668</strain>
    </source>
</reference>
<organism>
    <name type="scientific">Burkholderia pseudomallei (strain 668)</name>
    <dbReference type="NCBI Taxonomy" id="320373"/>
    <lineage>
        <taxon>Bacteria</taxon>
        <taxon>Pseudomonadati</taxon>
        <taxon>Pseudomonadota</taxon>
        <taxon>Betaproteobacteria</taxon>
        <taxon>Burkholderiales</taxon>
        <taxon>Burkholderiaceae</taxon>
        <taxon>Burkholderia</taxon>
        <taxon>pseudomallei group</taxon>
    </lineage>
</organism>
<sequence length="323" mass="35667">MKTTFLDFEQPIAELEAKIEELRFVQDDSAVDISEEIERLSKKSQQLTKDLYANLTPWQVSQIARHPQRPYTLDYVSELFTDFHELHGDRAFADDQSIVGGLARFNGHACMVIGHQKGRDTKERAARNFGMPRPEGYRKAERLMRVAEKFGLPIFTFVDTPGAYPGVGAEERGQSEAIGHNLYVMAELKTPIIATVIGEGGSGGALAIAVADTVMMLQFSTYSVISPEGCASILWKSAAKAPEAAEALGLTAHRLKALGLIDKIVNEPLGGAHRDPKGMAALLRRALGDSLRQFQGMSVDALRERRFERLMAYGKFKETTPRA</sequence>
<gene>
    <name evidence="1" type="primary">accA</name>
    <name type="ordered locus">BURPS668_2543</name>
</gene>
<accession>A3NB48</accession>
<name>ACCA_BURP6</name>
<keyword id="KW-0067">ATP-binding</keyword>
<keyword id="KW-0963">Cytoplasm</keyword>
<keyword id="KW-0275">Fatty acid biosynthesis</keyword>
<keyword id="KW-0276">Fatty acid metabolism</keyword>
<keyword id="KW-0444">Lipid biosynthesis</keyword>
<keyword id="KW-0443">Lipid metabolism</keyword>
<keyword id="KW-0547">Nucleotide-binding</keyword>
<keyword id="KW-0808">Transferase</keyword>
<comment type="function">
    <text evidence="1">Component of the acetyl coenzyme A carboxylase (ACC) complex. First, biotin carboxylase catalyzes the carboxylation of biotin on its carrier protein (BCCP) and then the CO(2) group is transferred by the carboxyltransferase to acetyl-CoA to form malonyl-CoA.</text>
</comment>
<comment type="catalytic activity">
    <reaction evidence="1">
        <text>N(6)-carboxybiotinyl-L-lysyl-[protein] + acetyl-CoA = N(6)-biotinyl-L-lysyl-[protein] + malonyl-CoA</text>
        <dbReference type="Rhea" id="RHEA:54728"/>
        <dbReference type="Rhea" id="RHEA-COMP:10505"/>
        <dbReference type="Rhea" id="RHEA-COMP:10506"/>
        <dbReference type="ChEBI" id="CHEBI:57288"/>
        <dbReference type="ChEBI" id="CHEBI:57384"/>
        <dbReference type="ChEBI" id="CHEBI:83144"/>
        <dbReference type="ChEBI" id="CHEBI:83145"/>
        <dbReference type="EC" id="2.1.3.15"/>
    </reaction>
</comment>
<comment type="pathway">
    <text evidence="1">Lipid metabolism; malonyl-CoA biosynthesis; malonyl-CoA from acetyl-CoA: step 1/1.</text>
</comment>
<comment type="subunit">
    <text evidence="1">Acetyl-CoA carboxylase is a heterohexamer composed of biotin carboxyl carrier protein (AccB), biotin carboxylase (AccC) and two subunits each of ACCase subunit alpha (AccA) and ACCase subunit beta (AccD).</text>
</comment>
<comment type="subcellular location">
    <subcellularLocation>
        <location evidence="1">Cytoplasm</location>
    </subcellularLocation>
</comment>
<comment type="similarity">
    <text evidence="1">Belongs to the AccA family.</text>
</comment>